<gene>
    <name type="primary">Ddt</name>
</gene>
<dbReference type="EC" id="4.1.1.84" evidence="1"/>
<dbReference type="EMBL" id="AF012431">
    <property type="protein sequence ID" value="AAC77467.1"/>
    <property type="molecule type" value="Genomic_DNA"/>
</dbReference>
<dbReference type="EMBL" id="AF068199">
    <property type="protein sequence ID" value="AAC32825.1"/>
    <property type="molecule type" value="Genomic_DNA"/>
</dbReference>
<dbReference type="EMBL" id="BC010753">
    <property type="protein sequence ID" value="AAH10753.1"/>
    <property type="molecule type" value="mRNA"/>
</dbReference>
<dbReference type="CCDS" id="CCDS23930.1"/>
<dbReference type="RefSeq" id="NP_034157.1">
    <property type="nucleotide sequence ID" value="NM_010027.1"/>
</dbReference>
<dbReference type="PDB" id="3KER">
    <property type="method" value="X-ray"/>
    <property type="resolution" value="2.78 A"/>
    <property type="chains" value="A/B/C/D=2-118"/>
</dbReference>
<dbReference type="PDBsum" id="3KER"/>
<dbReference type="SMR" id="O35215"/>
<dbReference type="BioGRID" id="199082">
    <property type="interactions" value="3"/>
</dbReference>
<dbReference type="FunCoup" id="O35215">
    <property type="interactions" value="298"/>
</dbReference>
<dbReference type="STRING" id="10090.ENSMUSP00000001716"/>
<dbReference type="GlyGen" id="O35215">
    <property type="glycosylation" value="1 site, 1 O-linked glycan (1 site)"/>
</dbReference>
<dbReference type="iPTMnet" id="O35215"/>
<dbReference type="PhosphoSitePlus" id="O35215"/>
<dbReference type="SwissPalm" id="O35215"/>
<dbReference type="REPRODUCTION-2DPAGE" id="O35215"/>
<dbReference type="CPTAC" id="non-CPTAC-3458"/>
<dbReference type="jPOST" id="O35215"/>
<dbReference type="PaxDb" id="10090-ENSMUSP00000001716"/>
<dbReference type="PeptideAtlas" id="O35215"/>
<dbReference type="ProteomicsDB" id="279471"/>
<dbReference type="Pumba" id="O35215"/>
<dbReference type="DNASU" id="13202"/>
<dbReference type="Ensembl" id="ENSMUST00000001716.8">
    <property type="protein sequence ID" value="ENSMUSP00000001716.8"/>
    <property type="gene ID" value="ENSMUSG00000001666.9"/>
</dbReference>
<dbReference type="GeneID" id="13202"/>
<dbReference type="KEGG" id="mmu:13202"/>
<dbReference type="UCSC" id="uc007fra.1">
    <property type="organism name" value="mouse"/>
</dbReference>
<dbReference type="AGR" id="MGI:1298381"/>
<dbReference type="CTD" id="1652"/>
<dbReference type="MGI" id="MGI:1298381">
    <property type="gene designation" value="Ddt"/>
</dbReference>
<dbReference type="VEuPathDB" id="HostDB:ENSMUSG00000001666"/>
<dbReference type="eggNOG" id="KOG1759">
    <property type="taxonomic scope" value="Eukaryota"/>
</dbReference>
<dbReference type="GeneTree" id="ENSGT00940000156821"/>
<dbReference type="InParanoid" id="O35215"/>
<dbReference type="OMA" id="PDRINIR"/>
<dbReference type="OrthoDB" id="6080988at2759"/>
<dbReference type="PhylomeDB" id="O35215"/>
<dbReference type="TreeFam" id="TF313853"/>
<dbReference type="BRENDA" id="4.1.1.84">
    <property type="organism ID" value="3474"/>
</dbReference>
<dbReference type="BioGRID-ORCS" id="13202">
    <property type="hits" value="1 hit in 76 CRISPR screens"/>
</dbReference>
<dbReference type="ChiTaRS" id="Ddt">
    <property type="organism name" value="mouse"/>
</dbReference>
<dbReference type="EvolutionaryTrace" id="O35215"/>
<dbReference type="PRO" id="PR:O35215"/>
<dbReference type="Proteomes" id="UP000000589">
    <property type="component" value="Chromosome 10"/>
</dbReference>
<dbReference type="RNAct" id="O35215">
    <property type="molecule type" value="protein"/>
</dbReference>
<dbReference type="Bgee" id="ENSMUSG00000001666">
    <property type="expression patterns" value="Expressed in right kidney and 74 other cell types or tissues"/>
</dbReference>
<dbReference type="ExpressionAtlas" id="O35215">
    <property type="expression patterns" value="baseline and differential"/>
</dbReference>
<dbReference type="GO" id="GO:0005737">
    <property type="term" value="C:cytoplasm"/>
    <property type="evidence" value="ECO:0007669"/>
    <property type="project" value="UniProtKB-SubCell"/>
</dbReference>
<dbReference type="GO" id="GO:0005615">
    <property type="term" value="C:extracellular space"/>
    <property type="evidence" value="ECO:0000314"/>
    <property type="project" value="BHF-UCL"/>
</dbReference>
<dbReference type="GO" id="GO:0033981">
    <property type="term" value="F:D-dopachrome decarboxylase activity"/>
    <property type="evidence" value="ECO:0000250"/>
    <property type="project" value="UniProtKB"/>
</dbReference>
<dbReference type="GO" id="GO:0002020">
    <property type="term" value="F:protease binding"/>
    <property type="evidence" value="ECO:0000353"/>
    <property type="project" value="BHF-UCL"/>
</dbReference>
<dbReference type="GO" id="GO:0042438">
    <property type="term" value="P:melanin biosynthetic process"/>
    <property type="evidence" value="ECO:0007669"/>
    <property type="project" value="UniProtKB-KW"/>
</dbReference>
<dbReference type="GO" id="GO:0050729">
    <property type="term" value="P:positive regulation of inflammatory response"/>
    <property type="evidence" value="ECO:0000315"/>
    <property type="project" value="BHF-UCL"/>
</dbReference>
<dbReference type="FunFam" id="3.30.429.10:FF:000003">
    <property type="entry name" value="D-dopachrome decarboxylase"/>
    <property type="match status" value="1"/>
</dbReference>
<dbReference type="Gene3D" id="3.30.429.10">
    <property type="entry name" value="Macrophage Migration Inhibitory Factor"/>
    <property type="match status" value="1"/>
</dbReference>
<dbReference type="InterPro" id="IPR001398">
    <property type="entry name" value="Macrophage_inhib_fac"/>
</dbReference>
<dbReference type="InterPro" id="IPR019829">
    <property type="entry name" value="Macrophage_inhib_fac_CS"/>
</dbReference>
<dbReference type="InterPro" id="IPR014347">
    <property type="entry name" value="Tautomerase/MIF_sf"/>
</dbReference>
<dbReference type="PANTHER" id="PTHR11954">
    <property type="entry name" value="D-DOPACHROME DECARBOXYLASE"/>
    <property type="match status" value="1"/>
</dbReference>
<dbReference type="PANTHER" id="PTHR11954:SF22">
    <property type="entry name" value="D-DOPACHROME DECARBOXYLASE"/>
    <property type="match status" value="1"/>
</dbReference>
<dbReference type="Pfam" id="PF01187">
    <property type="entry name" value="MIF"/>
    <property type="match status" value="1"/>
</dbReference>
<dbReference type="SUPFAM" id="SSF55331">
    <property type="entry name" value="Tautomerase/MIF"/>
    <property type="match status" value="1"/>
</dbReference>
<dbReference type="PROSITE" id="PS01158">
    <property type="entry name" value="MIF"/>
    <property type="match status" value="1"/>
</dbReference>
<comment type="function">
    <text evidence="1">Tautomerization of D-dopachrome with decarboxylation to give 5,6-dihydroxyindole (DHI).</text>
</comment>
<comment type="catalytic activity">
    <reaction evidence="1">
        <text>D-dopachrome + H(+) = 5,6-dihydroxyindole + CO2</text>
        <dbReference type="Rhea" id="RHEA:18441"/>
        <dbReference type="ChEBI" id="CHEBI:15378"/>
        <dbReference type="ChEBI" id="CHEBI:16526"/>
        <dbReference type="ChEBI" id="CHEBI:27404"/>
        <dbReference type="ChEBI" id="CHEBI:58782"/>
        <dbReference type="EC" id="4.1.1.84"/>
    </reaction>
    <physiologicalReaction direction="left-to-right" evidence="1">
        <dbReference type="Rhea" id="RHEA:18442"/>
    </physiologicalReaction>
</comment>
<comment type="subunit">
    <text evidence="1">Homotrimer.</text>
</comment>
<comment type="subcellular location">
    <subcellularLocation>
        <location evidence="1">Cytoplasm</location>
    </subcellularLocation>
</comment>
<comment type="similarity">
    <text evidence="4">Belongs to the MIF family.</text>
</comment>
<proteinExistence type="evidence at protein level"/>
<accession>O35215</accession>
<feature type="initiator methionine" description="Removed" evidence="3">
    <location>
        <position position="1"/>
    </location>
</feature>
<feature type="chain" id="PRO_0000158071" description="D-dopachrome decarboxylase">
    <location>
        <begin position="2"/>
        <end position="118"/>
    </location>
</feature>
<feature type="modified residue" description="N-acetylproline" evidence="3">
    <location>
        <position position="2"/>
    </location>
</feature>
<feature type="modified residue" description="N6-acetyllysine" evidence="5">
    <location>
        <position position="33"/>
    </location>
</feature>
<feature type="modified residue" description="Phosphoserine" evidence="2">
    <location>
        <position position="90"/>
    </location>
</feature>
<feature type="strand" evidence="6">
    <location>
        <begin position="3"/>
        <end position="10"/>
    </location>
</feature>
<feature type="helix" evidence="6">
    <location>
        <begin position="12"/>
        <end position="14"/>
    </location>
</feature>
<feature type="helix" evidence="6">
    <location>
        <begin position="19"/>
        <end position="31"/>
    </location>
</feature>
<feature type="helix" evidence="6">
    <location>
        <begin position="35"/>
        <end position="37"/>
    </location>
</feature>
<feature type="strand" evidence="6">
    <location>
        <begin position="39"/>
        <end position="43"/>
    </location>
</feature>
<feature type="strand" evidence="6">
    <location>
        <begin position="47"/>
        <end position="50"/>
    </location>
</feature>
<feature type="strand" evidence="6">
    <location>
        <begin position="58"/>
        <end position="70"/>
    </location>
</feature>
<feature type="helix" evidence="6">
    <location>
        <begin position="71"/>
        <end position="89"/>
    </location>
</feature>
<feature type="helix" evidence="6">
    <location>
        <begin position="93"/>
        <end position="95"/>
    </location>
</feature>
<feature type="strand" evidence="6">
    <location>
        <begin position="96"/>
        <end position="103"/>
    </location>
</feature>
<feature type="helix" evidence="6">
    <location>
        <begin position="105"/>
        <end position="107"/>
    </location>
</feature>
<feature type="strand" evidence="6">
    <location>
        <begin position="108"/>
        <end position="110"/>
    </location>
</feature>
<feature type="helix" evidence="6">
    <location>
        <begin position="115"/>
        <end position="117"/>
    </location>
</feature>
<keyword id="KW-0002">3D-structure</keyword>
<keyword id="KW-0007">Acetylation</keyword>
<keyword id="KW-0963">Cytoplasm</keyword>
<keyword id="KW-0903">Direct protein sequencing</keyword>
<keyword id="KW-0456">Lyase</keyword>
<keyword id="KW-0470">Melanin biosynthesis</keyword>
<keyword id="KW-0597">Phosphoprotein</keyword>
<keyword id="KW-1185">Reference proteome</keyword>
<evidence type="ECO:0000250" key="1">
    <source>
        <dbReference type="UniProtKB" id="P30046"/>
    </source>
</evidence>
<evidence type="ECO:0000250" key="2">
    <source>
        <dbReference type="UniProtKB" id="P80254"/>
    </source>
</evidence>
<evidence type="ECO:0000269" key="3">
    <source ref="4"/>
</evidence>
<evidence type="ECO:0000305" key="4"/>
<evidence type="ECO:0007744" key="5">
    <source>
    </source>
</evidence>
<evidence type="ECO:0007829" key="6">
    <source>
        <dbReference type="PDB" id="3KER"/>
    </source>
</evidence>
<sequence length="118" mass="13077">MPFVELETNLPASRIPAGLENRLCAATATILDKPEDRVSVTIRPGMTLLMNKSTEPCAHLLVSSIGVVGTAEQNRTHSASFFKFLTEELSLDQDRIVIRFFPLEAWQIGKKGTVMTFL</sequence>
<organism>
    <name type="scientific">Mus musculus</name>
    <name type="common">Mouse</name>
    <dbReference type="NCBI Taxonomy" id="10090"/>
    <lineage>
        <taxon>Eukaryota</taxon>
        <taxon>Metazoa</taxon>
        <taxon>Chordata</taxon>
        <taxon>Craniata</taxon>
        <taxon>Vertebrata</taxon>
        <taxon>Euteleostomi</taxon>
        <taxon>Mammalia</taxon>
        <taxon>Eutheria</taxon>
        <taxon>Euarchontoglires</taxon>
        <taxon>Glires</taxon>
        <taxon>Rodentia</taxon>
        <taxon>Myomorpha</taxon>
        <taxon>Muroidea</taxon>
        <taxon>Muridae</taxon>
        <taxon>Murinae</taxon>
        <taxon>Mus</taxon>
        <taxon>Mus</taxon>
    </lineage>
</organism>
<reference key="1">
    <citation type="journal article" date="1998" name="Mamm. Genome">
        <title>Conserved gene structure and genomic linkage for D-dopachrome tautomerase (DDT) and MIF.</title>
        <authorList>
            <person name="Esumi N."/>
            <person name="Budarf M."/>
            <person name="Ciccarelli L."/>
            <person name="Sellinger B."/>
            <person name="Kozak C.A."/>
            <person name="Wistow G."/>
        </authorList>
    </citation>
    <scope>NUCLEOTIDE SEQUENCE [GENOMIC DNA]</scope>
</reference>
<reference key="2">
    <citation type="journal article" date="1998" name="Biochim. Biophys. Acta">
        <title>Cloning of the mouse gene for D-dopachrome tautomerase.</title>
        <authorList>
            <person name="Kuriyama T."/>
            <person name="Fujinaga M."/>
            <person name="Koda T."/>
            <person name="Nishihira J."/>
        </authorList>
    </citation>
    <scope>NUCLEOTIDE SEQUENCE [GENOMIC DNA]</scope>
</reference>
<reference key="3">
    <citation type="journal article" date="2004" name="Genome Res.">
        <title>The status, quality, and expansion of the NIH full-length cDNA project: the Mammalian Gene Collection (MGC).</title>
        <authorList>
            <consortium name="The MGC Project Team"/>
        </authorList>
    </citation>
    <scope>NUCLEOTIDE SEQUENCE [LARGE SCALE MRNA]</scope>
    <source>
        <strain>FVB/N</strain>
        <tissue>Kidney</tissue>
    </source>
</reference>
<reference key="4">
    <citation type="submission" date="2005-07" db="UniProtKB">
        <authorList>
            <person name="Bienvenut W.V."/>
        </authorList>
    </citation>
    <scope>PROTEIN SEQUENCE OF 2-37 AND 84-95</scope>
    <scope>CLEAVAGE OF INITIATOR METHIONINE</scope>
    <scope>ACETYLATION AT PRO-2</scope>
    <scope>IDENTIFICATION BY MASS SPECTROMETRY</scope>
    <source>
        <strain>C57BL/6J</strain>
        <tissue>Liver</tissue>
    </source>
</reference>
<reference key="5">
    <citation type="journal article" date="2010" name="Cell">
        <title>A tissue-specific atlas of mouse protein phosphorylation and expression.</title>
        <authorList>
            <person name="Huttlin E.L."/>
            <person name="Jedrychowski M.P."/>
            <person name="Elias J.E."/>
            <person name="Goswami T."/>
            <person name="Rad R."/>
            <person name="Beausoleil S.A."/>
            <person name="Villen J."/>
            <person name="Haas W."/>
            <person name="Sowa M.E."/>
            <person name="Gygi S.P."/>
        </authorList>
    </citation>
    <scope>IDENTIFICATION BY MASS SPECTROMETRY [LARGE SCALE ANALYSIS]</scope>
    <source>
        <tissue>Brain</tissue>
        <tissue>Brown adipose tissue</tissue>
        <tissue>Heart</tissue>
        <tissue>Kidney</tissue>
        <tissue>Liver</tissue>
        <tissue>Lung</tissue>
        <tissue>Pancreas</tissue>
        <tissue>Spleen</tissue>
        <tissue>Testis</tissue>
    </source>
</reference>
<reference key="6">
    <citation type="journal article" date="2013" name="Mol. Cell">
        <title>SIRT5-mediated lysine desuccinylation impacts diverse metabolic pathways.</title>
        <authorList>
            <person name="Park J."/>
            <person name="Chen Y."/>
            <person name="Tishkoff D.X."/>
            <person name="Peng C."/>
            <person name="Tan M."/>
            <person name="Dai L."/>
            <person name="Xie Z."/>
            <person name="Zhang Y."/>
            <person name="Zwaans B.M."/>
            <person name="Skinner M.E."/>
            <person name="Lombard D.B."/>
            <person name="Zhao Y."/>
        </authorList>
    </citation>
    <scope>ACETYLATION [LARGE SCALE ANALYSIS] AT LYS-33</scope>
    <scope>IDENTIFICATION BY MASS SPECTROMETRY [LARGE SCALE ANALYSIS]</scope>
    <source>
        <tissue>Embryonic fibroblast</tissue>
    </source>
</reference>
<protein>
    <recommendedName>
        <fullName>D-dopachrome decarboxylase</fullName>
        <ecNumber evidence="1">4.1.1.84</ecNumber>
    </recommendedName>
    <alternativeName>
        <fullName>D-dopachrome tautomerase</fullName>
    </alternativeName>
</protein>
<name>DOPD_MOUSE</name>